<keyword id="KW-0479">Metal-binding</keyword>
<keyword id="KW-0687">Ribonucleoprotein</keyword>
<keyword id="KW-0689">Ribosomal protein</keyword>
<keyword id="KW-0694">RNA-binding</keyword>
<keyword id="KW-0699">rRNA-binding</keyword>
<keyword id="KW-0862">Zinc</keyword>
<keyword id="KW-0863">Zinc-finger</keyword>
<reference key="1">
    <citation type="journal article" date="1998" name="DNA Res.">
        <title>Complete sequence and gene organization of the genome of a hyper-thermophilic archaebacterium, Pyrococcus horikoshii OT3.</title>
        <authorList>
            <person name="Kawarabayasi Y."/>
            <person name="Sawada M."/>
            <person name="Horikawa H."/>
            <person name="Haikawa Y."/>
            <person name="Hino Y."/>
            <person name="Yamamoto S."/>
            <person name="Sekine M."/>
            <person name="Baba S."/>
            <person name="Kosugi H."/>
            <person name="Hosoyama A."/>
            <person name="Nagai Y."/>
            <person name="Sakai M."/>
            <person name="Ogura K."/>
            <person name="Otsuka R."/>
            <person name="Nakazawa H."/>
            <person name="Takamiya M."/>
            <person name="Ohfuku Y."/>
            <person name="Funahashi T."/>
            <person name="Tanaka T."/>
            <person name="Kudoh Y."/>
            <person name="Yamazaki J."/>
            <person name="Kushida N."/>
            <person name="Oguchi A."/>
            <person name="Aoki K."/>
            <person name="Yoshizawa T."/>
            <person name="Nakamura Y."/>
            <person name="Robb F.T."/>
            <person name="Horikoshi K."/>
            <person name="Masuchi Y."/>
            <person name="Shizuya H."/>
            <person name="Kikuchi H."/>
        </authorList>
    </citation>
    <scope>NUCLEOTIDE SEQUENCE [LARGE SCALE GENOMIC DNA]</scope>
    <source>
        <strain>ATCC 700860 / DSM 12428 / JCM 9974 / NBRC 100139 / OT-3</strain>
    </source>
</reference>
<evidence type="ECO:0000255" key="1">
    <source>
        <dbReference type="HAMAP-Rule" id="MF_00327"/>
    </source>
</evidence>
<evidence type="ECO:0000305" key="2"/>
<organism>
    <name type="scientific">Pyrococcus horikoshii (strain ATCC 700860 / DSM 12428 / JCM 9974 / NBRC 100139 / OT-3)</name>
    <dbReference type="NCBI Taxonomy" id="70601"/>
    <lineage>
        <taxon>Archaea</taxon>
        <taxon>Methanobacteriati</taxon>
        <taxon>Methanobacteriota</taxon>
        <taxon>Thermococci</taxon>
        <taxon>Thermococcales</taxon>
        <taxon>Thermococcaceae</taxon>
        <taxon>Pyrococcus</taxon>
    </lineage>
</organism>
<feature type="chain" id="PRO_0000139852" description="Large ribosomal subunit protein eL43">
    <location>
        <begin position="1"/>
        <end position="83"/>
    </location>
</feature>
<feature type="zinc finger region" description="C4-type" evidence="1">
    <location>
        <begin position="38"/>
        <end position="59"/>
    </location>
</feature>
<feature type="binding site" evidence="1">
    <location>
        <position position="38"/>
    </location>
    <ligand>
        <name>Zn(2+)</name>
        <dbReference type="ChEBI" id="CHEBI:29105"/>
    </ligand>
</feature>
<feature type="binding site" evidence="1">
    <location>
        <position position="41"/>
    </location>
    <ligand>
        <name>Zn(2+)</name>
        <dbReference type="ChEBI" id="CHEBI:29105"/>
    </ligand>
</feature>
<feature type="binding site" evidence="1">
    <location>
        <position position="56"/>
    </location>
    <ligand>
        <name>Zn(2+)</name>
        <dbReference type="ChEBI" id="CHEBI:29105"/>
    </ligand>
</feature>
<feature type="binding site" evidence="1">
    <location>
        <position position="59"/>
    </location>
    <ligand>
        <name>Zn(2+)</name>
        <dbReference type="ChEBI" id="CHEBI:29105"/>
    </ligand>
</feature>
<comment type="function">
    <text evidence="1">Binds to the 23S rRNA.</text>
</comment>
<comment type="cofactor">
    <cofactor evidence="1">
        <name>Zn(2+)</name>
        <dbReference type="ChEBI" id="CHEBI:29105"/>
    </cofactor>
    <text evidence="1">Binds 1 zinc ion per subunit.</text>
</comment>
<comment type="subunit">
    <text evidence="1">Part of the 50S ribosomal subunit.</text>
</comment>
<comment type="similarity">
    <text evidence="1">Belongs to the eukaryotic ribosomal protein eL43 family. Putative zinc-binding subfamily.</text>
</comment>
<comment type="sequence caution" evidence="2">
    <conflict type="erroneous initiation">
        <sequence resource="EMBL-CDS" id="BAA31025"/>
    </conflict>
    <text>Extended N-terminus.</text>
</comment>
<protein>
    <recommendedName>
        <fullName evidence="1">Large ribosomal subunit protein eL43</fullName>
    </recommendedName>
    <alternativeName>
        <fullName evidence="2">50S ribosomal protein L37Ae</fullName>
    </alternativeName>
    <alternativeName>
        <fullName evidence="1">Ribosomal protein L43e</fullName>
    </alternativeName>
</protein>
<name>RL37A_PYRHO</name>
<dbReference type="EMBL" id="BA000001">
    <property type="protein sequence ID" value="BAA31025.1"/>
    <property type="status" value="ALT_INIT"/>
    <property type="molecule type" value="Genomic_DNA"/>
</dbReference>
<dbReference type="PIR" id="B71204">
    <property type="entry name" value="B71204"/>
</dbReference>
<dbReference type="RefSeq" id="WP_048053512.1">
    <property type="nucleotide sequence ID" value="NC_000961.1"/>
</dbReference>
<dbReference type="SMR" id="O74106"/>
<dbReference type="STRING" id="70601.gene:9378910"/>
<dbReference type="EnsemblBacteria" id="BAA31025">
    <property type="protein sequence ID" value="BAA31025"/>
    <property type="gene ID" value="BAA31025"/>
</dbReference>
<dbReference type="GeneID" id="1442747"/>
<dbReference type="KEGG" id="pho:PHS057"/>
<dbReference type="eggNOG" id="arCOG04208">
    <property type="taxonomic scope" value="Archaea"/>
</dbReference>
<dbReference type="OrthoDB" id="372011at2157"/>
<dbReference type="Proteomes" id="UP000000752">
    <property type="component" value="Chromosome"/>
</dbReference>
<dbReference type="GO" id="GO:1990904">
    <property type="term" value="C:ribonucleoprotein complex"/>
    <property type="evidence" value="ECO:0007669"/>
    <property type="project" value="UniProtKB-KW"/>
</dbReference>
<dbReference type="GO" id="GO:0005840">
    <property type="term" value="C:ribosome"/>
    <property type="evidence" value="ECO:0007669"/>
    <property type="project" value="UniProtKB-KW"/>
</dbReference>
<dbReference type="GO" id="GO:0070180">
    <property type="term" value="F:large ribosomal subunit rRNA binding"/>
    <property type="evidence" value="ECO:0007669"/>
    <property type="project" value="UniProtKB-UniRule"/>
</dbReference>
<dbReference type="GO" id="GO:0003735">
    <property type="term" value="F:structural constituent of ribosome"/>
    <property type="evidence" value="ECO:0007669"/>
    <property type="project" value="InterPro"/>
</dbReference>
<dbReference type="GO" id="GO:0008270">
    <property type="term" value="F:zinc ion binding"/>
    <property type="evidence" value="ECO:0007669"/>
    <property type="project" value="UniProtKB-UniRule"/>
</dbReference>
<dbReference type="GO" id="GO:0006412">
    <property type="term" value="P:translation"/>
    <property type="evidence" value="ECO:0007669"/>
    <property type="project" value="UniProtKB-UniRule"/>
</dbReference>
<dbReference type="Gene3D" id="2.20.25.30">
    <property type="match status" value="1"/>
</dbReference>
<dbReference type="HAMAP" id="MF_00327">
    <property type="entry name" value="Ribosomal_eL43"/>
    <property type="match status" value="1"/>
</dbReference>
<dbReference type="InterPro" id="IPR011331">
    <property type="entry name" value="Ribosomal_eL37/eL43"/>
</dbReference>
<dbReference type="InterPro" id="IPR002674">
    <property type="entry name" value="Ribosomal_eL43"/>
</dbReference>
<dbReference type="InterPro" id="IPR050522">
    <property type="entry name" value="Ribosomal_protein_eL43"/>
</dbReference>
<dbReference type="InterPro" id="IPR011332">
    <property type="entry name" value="Ribosomal_zn-bd"/>
</dbReference>
<dbReference type="NCBIfam" id="TIGR00280">
    <property type="entry name" value="eL43_euk_arch"/>
    <property type="match status" value="1"/>
</dbReference>
<dbReference type="NCBIfam" id="NF003058">
    <property type="entry name" value="PRK03976.1"/>
    <property type="match status" value="1"/>
</dbReference>
<dbReference type="PANTHER" id="PTHR48129">
    <property type="entry name" value="60S RIBOSOMAL PROTEIN L37A"/>
    <property type="match status" value="1"/>
</dbReference>
<dbReference type="PANTHER" id="PTHR48129:SF1">
    <property type="entry name" value="LARGE RIBOSOMAL SUBUNIT PROTEIN EL43"/>
    <property type="match status" value="1"/>
</dbReference>
<dbReference type="Pfam" id="PF01780">
    <property type="entry name" value="Ribosomal_L37ae"/>
    <property type="match status" value="1"/>
</dbReference>
<dbReference type="SUPFAM" id="SSF57829">
    <property type="entry name" value="Zn-binding ribosomal proteins"/>
    <property type="match status" value="1"/>
</dbReference>
<sequence>MSGTKKVGSAGRFGARYGLKIRRRVAAVEAKMRQKHVCPVCGRRAVKRISTGIWQCTKCGAIFAGGAYLPVTPAGKVARRIME</sequence>
<gene>
    <name evidence="1" type="primary">rpl37ae</name>
    <name type="ordered locus">PH1900.2</name>
    <name type="ORF">PHS057</name>
</gene>
<accession>O74106</accession>
<proteinExistence type="inferred from homology"/>